<organism>
    <name type="scientific">Lactobacillus delbrueckii subsp. bulgaricus (strain ATCC 11842 / DSM 20081 / BCRC 10696 / JCM 1002 / NBRC 13953 / NCIMB 11778 / NCTC 12712 / WDCM 00102 / Lb 14)</name>
    <dbReference type="NCBI Taxonomy" id="390333"/>
    <lineage>
        <taxon>Bacteria</taxon>
        <taxon>Bacillati</taxon>
        <taxon>Bacillota</taxon>
        <taxon>Bacilli</taxon>
        <taxon>Lactobacillales</taxon>
        <taxon>Lactobacillaceae</taxon>
        <taxon>Lactobacillus</taxon>
    </lineage>
</organism>
<keyword id="KW-0963">Cytoplasm</keyword>
<keyword id="KW-0312">Gluconeogenesis</keyword>
<keyword id="KW-0324">Glycolysis</keyword>
<keyword id="KW-0413">Isomerase</keyword>
<keyword id="KW-1185">Reference proteome</keyword>
<sequence>MSRTPIIAGNWKLNMNPKETVEFVNAVKDQLPDPSKVESVICAPAVDLDALLKAAEGSNLHVGAENCYWENSGAFTGETSPAVLKEMGVQYVIIGHSERRDYFHETDEDINKKAKAIFANGLTPILCCGESLETREAGKENEWVVSQIKAGLEGLTSEQVSKLVIAYEPIWAIGTGKTASSDQAEEMCKTIRETVKDLYNEETAENVRIQYGGSVKPANVKELMAKPNIDGGLVGGASLVPDSYLALVNYQD</sequence>
<name>TPIS_LACDA</name>
<accession>Q1GB25</accession>
<gene>
    <name evidence="1" type="primary">tpiA</name>
    <name type="ordered locus">Ldb0637</name>
</gene>
<reference key="1">
    <citation type="journal article" date="2006" name="Proc. Natl. Acad. Sci. U.S.A.">
        <title>The complete genome sequence of Lactobacillus bulgaricus reveals extensive and ongoing reductive evolution.</title>
        <authorList>
            <person name="van de Guchte M."/>
            <person name="Penaud S."/>
            <person name="Grimaldi C."/>
            <person name="Barbe V."/>
            <person name="Bryson K."/>
            <person name="Nicolas P."/>
            <person name="Robert C."/>
            <person name="Oztas S."/>
            <person name="Mangenot S."/>
            <person name="Couloux A."/>
            <person name="Loux V."/>
            <person name="Dervyn R."/>
            <person name="Bossy R."/>
            <person name="Bolotin A."/>
            <person name="Batto J.-M."/>
            <person name="Walunas T."/>
            <person name="Gibrat J.-F."/>
            <person name="Bessieres P."/>
            <person name="Weissenbach J."/>
            <person name="Ehrlich S.D."/>
            <person name="Maguin E."/>
        </authorList>
    </citation>
    <scope>NUCLEOTIDE SEQUENCE [LARGE SCALE GENOMIC DNA]</scope>
    <source>
        <strain>ATCC 11842 / DSM 20081 / BCRC 10696 / JCM 1002 / NBRC 13953 / NCIMB 11778 / NCTC 12712 / WDCM 00102 / Lb 14</strain>
    </source>
</reference>
<comment type="function">
    <text evidence="1">Involved in the gluconeogenesis. Catalyzes stereospecifically the conversion of dihydroxyacetone phosphate (DHAP) to D-glyceraldehyde-3-phosphate (G3P).</text>
</comment>
<comment type="catalytic activity">
    <reaction evidence="1">
        <text>D-glyceraldehyde 3-phosphate = dihydroxyacetone phosphate</text>
        <dbReference type="Rhea" id="RHEA:18585"/>
        <dbReference type="ChEBI" id="CHEBI:57642"/>
        <dbReference type="ChEBI" id="CHEBI:59776"/>
        <dbReference type="EC" id="5.3.1.1"/>
    </reaction>
</comment>
<comment type="pathway">
    <text evidence="1">Carbohydrate biosynthesis; gluconeogenesis.</text>
</comment>
<comment type="pathway">
    <text evidence="1">Carbohydrate degradation; glycolysis; D-glyceraldehyde 3-phosphate from glycerone phosphate: step 1/1.</text>
</comment>
<comment type="subunit">
    <text evidence="1">Homodimer.</text>
</comment>
<comment type="subcellular location">
    <subcellularLocation>
        <location evidence="1">Cytoplasm</location>
    </subcellularLocation>
</comment>
<comment type="similarity">
    <text evidence="1">Belongs to the triosephosphate isomerase family.</text>
</comment>
<protein>
    <recommendedName>
        <fullName evidence="1">Triosephosphate isomerase</fullName>
        <shortName evidence="1">TIM</shortName>
        <shortName evidence="1">TPI</shortName>
        <ecNumber evidence="1">5.3.1.1</ecNumber>
    </recommendedName>
    <alternativeName>
        <fullName evidence="1">Triose-phosphate isomerase</fullName>
    </alternativeName>
</protein>
<feature type="chain" id="PRO_0000307484" description="Triosephosphate isomerase">
    <location>
        <begin position="1"/>
        <end position="252"/>
    </location>
</feature>
<feature type="active site" description="Electrophile" evidence="1">
    <location>
        <position position="96"/>
    </location>
</feature>
<feature type="active site" description="Proton acceptor" evidence="1">
    <location>
        <position position="168"/>
    </location>
</feature>
<feature type="binding site" evidence="1">
    <location>
        <begin position="10"/>
        <end position="12"/>
    </location>
    <ligand>
        <name>substrate</name>
    </ligand>
</feature>
<feature type="binding site" evidence="1">
    <location>
        <position position="174"/>
    </location>
    <ligand>
        <name>substrate</name>
    </ligand>
</feature>
<feature type="binding site" evidence="1">
    <location>
        <position position="214"/>
    </location>
    <ligand>
        <name>substrate</name>
    </ligand>
</feature>
<feature type="binding site" evidence="1">
    <location>
        <begin position="235"/>
        <end position="236"/>
    </location>
    <ligand>
        <name>substrate</name>
    </ligand>
</feature>
<dbReference type="EC" id="5.3.1.1" evidence="1"/>
<dbReference type="EMBL" id="CR954253">
    <property type="protein sequence ID" value="CAI97466.1"/>
    <property type="molecule type" value="Genomic_DNA"/>
</dbReference>
<dbReference type="RefSeq" id="WP_003618963.1">
    <property type="nucleotide sequence ID" value="NZ_JQAV01000001.1"/>
</dbReference>
<dbReference type="SMR" id="Q1GB25"/>
<dbReference type="STRING" id="390333.Ldb0637"/>
<dbReference type="KEGG" id="ldb:Ldb0637"/>
<dbReference type="PATRIC" id="fig|390333.13.peg.162"/>
<dbReference type="eggNOG" id="COG0149">
    <property type="taxonomic scope" value="Bacteria"/>
</dbReference>
<dbReference type="HOGENOM" id="CLU_024251_2_3_9"/>
<dbReference type="BioCyc" id="LDEL390333:LDB_RS02745-MONOMER"/>
<dbReference type="UniPathway" id="UPA00109">
    <property type="reaction ID" value="UER00189"/>
</dbReference>
<dbReference type="UniPathway" id="UPA00138"/>
<dbReference type="Proteomes" id="UP000001259">
    <property type="component" value="Chromosome"/>
</dbReference>
<dbReference type="GO" id="GO:0005829">
    <property type="term" value="C:cytosol"/>
    <property type="evidence" value="ECO:0007669"/>
    <property type="project" value="TreeGrafter"/>
</dbReference>
<dbReference type="GO" id="GO:0004807">
    <property type="term" value="F:triose-phosphate isomerase activity"/>
    <property type="evidence" value="ECO:0007669"/>
    <property type="project" value="UniProtKB-UniRule"/>
</dbReference>
<dbReference type="GO" id="GO:0006094">
    <property type="term" value="P:gluconeogenesis"/>
    <property type="evidence" value="ECO:0007669"/>
    <property type="project" value="UniProtKB-UniRule"/>
</dbReference>
<dbReference type="GO" id="GO:0046166">
    <property type="term" value="P:glyceraldehyde-3-phosphate biosynthetic process"/>
    <property type="evidence" value="ECO:0007669"/>
    <property type="project" value="TreeGrafter"/>
</dbReference>
<dbReference type="GO" id="GO:0019563">
    <property type="term" value="P:glycerol catabolic process"/>
    <property type="evidence" value="ECO:0007669"/>
    <property type="project" value="TreeGrafter"/>
</dbReference>
<dbReference type="GO" id="GO:0006096">
    <property type="term" value="P:glycolytic process"/>
    <property type="evidence" value="ECO:0007669"/>
    <property type="project" value="UniProtKB-UniRule"/>
</dbReference>
<dbReference type="CDD" id="cd00311">
    <property type="entry name" value="TIM"/>
    <property type="match status" value="1"/>
</dbReference>
<dbReference type="FunFam" id="3.20.20.70:FF:000016">
    <property type="entry name" value="Triosephosphate isomerase"/>
    <property type="match status" value="1"/>
</dbReference>
<dbReference type="Gene3D" id="3.20.20.70">
    <property type="entry name" value="Aldolase class I"/>
    <property type="match status" value="1"/>
</dbReference>
<dbReference type="HAMAP" id="MF_00147_B">
    <property type="entry name" value="TIM_B"/>
    <property type="match status" value="1"/>
</dbReference>
<dbReference type="InterPro" id="IPR013785">
    <property type="entry name" value="Aldolase_TIM"/>
</dbReference>
<dbReference type="InterPro" id="IPR035990">
    <property type="entry name" value="TIM_sf"/>
</dbReference>
<dbReference type="InterPro" id="IPR022896">
    <property type="entry name" value="TrioseP_Isoase_bac/euk"/>
</dbReference>
<dbReference type="InterPro" id="IPR000652">
    <property type="entry name" value="Triosephosphate_isomerase"/>
</dbReference>
<dbReference type="InterPro" id="IPR020861">
    <property type="entry name" value="Triosephosphate_isomerase_AS"/>
</dbReference>
<dbReference type="NCBIfam" id="TIGR00419">
    <property type="entry name" value="tim"/>
    <property type="match status" value="1"/>
</dbReference>
<dbReference type="PANTHER" id="PTHR21139">
    <property type="entry name" value="TRIOSEPHOSPHATE ISOMERASE"/>
    <property type="match status" value="1"/>
</dbReference>
<dbReference type="PANTHER" id="PTHR21139:SF42">
    <property type="entry name" value="TRIOSEPHOSPHATE ISOMERASE"/>
    <property type="match status" value="1"/>
</dbReference>
<dbReference type="Pfam" id="PF00121">
    <property type="entry name" value="TIM"/>
    <property type="match status" value="1"/>
</dbReference>
<dbReference type="SUPFAM" id="SSF51351">
    <property type="entry name" value="Triosephosphate isomerase (TIM)"/>
    <property type="match status" value="1"/>
</dbReference>
<dbReference type="PROSITE" id="PS00171">
    <property type="entry name" value="TIM_1"/>
    <property type="match status" value="1"/>
</dbReference>
<dbReference type="PROSITE" id="PS51440">
    <property type="entry name" value="TIM_2"/>
    <property type="match status" value="1"/>
</dbReference>
<evidence type="ECO:0000255" key="1">
    <source>
        <dbReference type="HAMAP-Rule" id="MF_00147"/>
    </source>
</evidence>
<proteinExistence type="inferred from homology"/>